<comment type="function">
    <text evidence="1">Catalyzes the initial step of the lipid cycle reactions in the biosynthesis of the cell wall peptidoglycan: transfers peptidoglycan precursor phospho-MurNAc-pentapeptide from UDP-MurNAc-pentapeptide onto the lipid carrier undecaprenyl phosphate, yielding undecaprenyl-pyrophosphoryl-MurNAc-pentapeptide, known as lipid I.</text>
</comment>
<comment type="catalytic activity">
    <reaction evidence="1">
        <text>UDP-N-acetyl-alpha-D-muramoyl-L-alanyl-gamma-D-glutamyl-meso-2,6-diaminopimeloyl-D-alanyl-D-alanine + di-trans,octa-cis-undecaprenyl phosphate = di-trans,octa-cis-undecaprenyl diphospho-N-acetyl-alpha-D-muramoyl-L-alanyl-D-glutamyl-meso-2,6-diaminopimeloyl-D-alanyl-D-alanine + UMP</text>
        <dbReference type="Rhea" id="RHEA:28386"/>
        <dbReference type="ChEBI" id="CHEBI:57865"/>
        <dbReference type="ChEBI" id="CHEBI:60392"/>
        <dbReference type="ChEBI" id="CHEBI:61386"/>
        <dbReference type="ChEBI" id="CHEBI:61387"/>
        <dbReference type="EC" id="2.7.8.13"/>
    </reaction>
</comment>
<comment type="cofactor">
    <cofactor evidence="1">
        <name>Mg(2+)</name>
        <dbReference type="ChEBI" id="CHEBI:18420"/>
    </cofactor>
</comment>
<comment type="pathway">
    <text evidence="1">Cell wall biogenesis; peptidoglycan biosynthesis.</text>
</comment>
<comment type="subcellular location">
    <subcellularLocation>
        <location evidence="1">Cell inner membrane</location>
        <topology evidence="1">Multi-pass membrane protein</topology>
    </subcellularLocation>
</comment>
<comment type="similarity">
    <text evidence="1">Belongs to the glycosyltransferase 4 family. MraY subfamily.</text>
</comment>
<organism>
    <name type="scientific">Azotobacter vinelandii (strain DJ / ATCC BAA-1303)</name>
    <dbReference type="NCBI Taxonomy" id="322710"/>
    <lineage>
        <taxon>Bacteria</taxon>
        <taxon>Pseudomonadati</taxon>
        <taxon>Pseudomonadota</taxon>
        <taxon>Gammaproteobacteria</taxon>
        <taxon>Pseudomonadales</taxon>
        <taxon>Pseudomonadaceae</taxon>
        <taxon>Azotobacter</taxon>
    </lineage>
</organism>
<accession>C1DQ96</accession>
<protein>
    <recommendedName>
        <fullName evidence="1">Phospho-N-acetylmuramoyl-pentapeptide-transferase</fullName>
        <ecNumber evidence="1">2.7.8.13</ecNumber>
    </recommendedName>
    <alternativeName>
        <fullName evidence="1">UDP-MurNAc-pentapeptide phosphotransferase</fullName>
    </alternativeName>
</protein>
<reference key="1">
    <citation type="journal article" date="2009" name="J. Bacteriol.">
        <title>Genome sequence of Azotobacter vinelandii, an obligate aerobe specialized to support diverse anaerobic metabolic processes.</title>
        <authorList>
            <person name="Setubal J.C."/>
            <person name="Dos Santos P."/>
            <person name="Goldman B.S."/>
            <person name="Ertesvaag H."/>
            <person name="Espin G."/>
            <person name="Rubio L.M."/>
            <person name="Valla S."/>
            <person name="Almeida N.F."/>
            <person name="Balasubramanian D."/>
            <person name="Cromes L."/>
            <person name="Curatti L."/>
            <person name="Du Z."/>
            <person name="Godsy E."/>
            <person name="Goodner B."/>
            <person name="Hellner-Burris K."/>
            <person name="Hernandez J.A."/>
            <person name="Houmiel K."/>
            <person name="Imperial J."/>
            <person name="Kennedy C."/>
            <person name="Larson T.J."/>
            <person name="Latreille P."/>
            <person name="Ligon L.S."/>
            <person name="Lu J."/>
            <person name="Maerk M."/>
            <person name="Miller N.M."/>
            <person name="Norton S."/>
            <person name="O'Carroll I.P."/>
            <person name="Paulsen I."/>
            <person name="Raulfs E.C."/>
            <person name="Roemer R."/>
            <person name="Rosser J."/>
            <person name="Segura D."/>
            <person name="Slater S."/>
            <person name="Stricklin S.L."/>
            <person name="Studholme D.J."/>
            <person name="Sun J."/>
            <person name="Viana C.J."/>
            <person name="Wallin E."/>
            <person name="Wang B."/>
            <person name="Wheeler C."/>
            <person name="Zhu H."/>
            <person name="Dean D.R."/>
            <person name="Dixon R."/>
            <person name="Wood D."/>
        </authorList>
    </citation>
    <scope>NUCLEOTIDE SEQUENCE [LARGE SCALE GENOMIC DNA]</scope>
    <source>
        <strain>DJ / ATCC BAA-1303</strain>
    </source>
</reference>
<keyword id="KW-0131">Cell cycle</keyword>
<keyword id="KW-0132">Cell division</keyword>
<keyword id="KW-0997">Cell inner membrane</keyword>
<keyword id="KW-1003">Cell membrane</keyword>
<keyword id="KW-0133">Cell shape</keyword>
<keyword id="KW-0961">Cell wall biogenesis/degradation</keyword>
<keyword id="KW-0460">Magnesium</keyword>
<keyword id="KW-0472">Membrane</keyword>
<keyword id="KW-0479">Metal-binding</keyword>
<keyword id="KW-0573">Peptidoglycan synthesis</keyword>
<keyword id="KW-0808">Transferase</keyword>
<keyword id="KW-0812">Transmembrane</keyword>
<keyword id="KW-1133">Transmembrane helix</keyword>
<sequence length="360" mass="39161">MLLLLAEYLQQFHTGFAVVQYLTLRGILGVLTALILALCLGPWMIRTLQIRQIGQAVRDDGPQSHLSKKGTPTMGGALILSAIAISTLLWADLSNRYVWTVLAVTLLFGAIGWVDDYRKVIEKNSRGLPSRWKYFWQSVFGLGAALFLYMTAQTPAETTLILPLIKTIEIPLGAAFIVLTYFVIVGSSNAVNLTDGLDGLAIMPTVMVGGALGIFCYLSGNVKFAEYLLIPSVAGAGELIVFCGALIGAGLGFLWFNTYPAQVFMGDVGALALGAALGTIAVIVRQEVVLFIMGGVFVMETLSVMIQVASFKLTGKRVFRMAPIHHHFELKGWPEPRVIVRFWIITVVLVLIGLATLKLR</sequence>
<proteinExistence type="inferred from homology"/>
<dbReference type="EC" id="2.7.8.13" evidence="1"/>
<dbReference type="EMBL" id="CP001157">
    <property type="protein sequence ID" value="ACO77548.1"/>
    <property type="molecule type" value="Genomic_DNA"/>
</dbReference>
<dbReference type="RefSeq" id="WP_012699968.1">
    <property type="nucleotide sequence ID" value="NC_012560.1"/>
</dbReference>
<dbReference type="SMR" id="C1DQ96"/>
<dbReference type="STRING" id="322710.Avin_13220"/>
<dbReference type="EnsemblBacteria" id="ACO77548">
    <property type="protein sequence ID" value="ACO77548"/>
    <property type="gene ID" value="Avin_13220"/>
</dbReference>
<dbReference type="GeneID" id="88184638"/>
<dbReference type="KEGG" id="avn:Avin_13220"/>
<dbReference type="eggNOG" id="COG0472">
    <property type="taxonomic scope" value="Bacteria"/>
</dbReference>
<dbReference type="HOGENOM" id="CLU_023982_0_0_6"/>
<dbReference type="OrthoDB" id="9805475at2"/>
<dbReference type="UniPathway" id="UPA00219"/>
<dbReference type="Proteomes" id="UP000002424">
    <property type="component" value="Chromosome"/>
</dbReference>
<dbReference type="GO" id="GO:0005886">
    <property type="term" value="C:plasma membrane"/>
    <property type="evidence" value="ECO:0007669"/>
    <property type="project" value="UniProtKB-SubCell"/>
</dbReference>
<dbReference type="GO" id="GO:0046872">
    <property type="term" value="F:metal ion binding"/>
    <property type="evidence" value="ECO:0007669"/>
    <property type="project" value="UniProtKB-KW"/>
</dbReference>
<dbReference type="GO" id="GO:0008963">
    <property type="term" value="F:phospho-N-acetylmuramoyl-pentapeptide-transferase activity"/>
    <property type="evidence" value="ECO:0007669"/>
    <property type="project" value="UniProtKB-UniRule"/>
</dbReference>
<dbReference type="GO" id="GO:0051992">
    <property type="term" value="F:UDP-N-acetylmuramoyl-L-alanyl-D-glutamyl-meso-2,6-diaminopimelyl-D-alanyl-D-alanine:undecaprenyl-phosphate transferase activity"/>
    <property type="evidence" value="ECO:0007669"/>
    <property type="project" value="RHEA"/>
</dbReference>
<dbReference type="GO" id="GO:0051301">
    <property type="term" value="P:cell division"/>
    <property type="evidence" value="ECO:0007669"/>
    <property type="project" value="UniProtKB-KW"/>
</dbReference>
<dbReference type="GO" id="GO:0071555">
    <property type="term" value="P:cell wall organization"/>
    <property type="evidence" value="ECO:0007669"/>
    <property type="project" value="UniProtKB-KW"/>
</dbReference>
<dbReference type="GO" id="GO:0009252">
    <property type="term" value="P:peptidoglycan biosynthetic process"/>
    <property type="evidence" value="ECO:0007669"/>
    <property type="project" value="UniProtKB-UniRule"/>
</dbReference>
<dbReference type="GO" id="GO:0008360">
    <property type="term" value="P:regulation of cell shape"/>
    <property type="evidence" value="ECO:0007669"/>
    <property type="project" value="UniProtKB-KW"/>
</dbReference>
<dbReference type="CDD" id="cd06852">
    <property type="entry name" value="GT_MraY"/>
    <property type="match status" value="1"/>
</dbReference>
<dbReference type="HAMAP" id="MF_00038">
    <property type="entry name" value="MraY"/>
    <property type="match status" value="1"/>
</dbReference>
<dbReference type="InterPro" id="IPR000715">
    <property type="entry name" value="Glycosyl_transferase_4"/>
</dbReference>
<dbReference type="InterPro" id="IPR003524">
    <property type="entry name" value="PNAcMuramoyl-5peptid_Trfase"/>
</dbReference>
<dbReference type="InterPro" id="IPR018480">
    <property type="entry name" value="PNAcMuramoyl-5peptid_Trfase_CS"/>
</dbReference>
<dbReference type="NCBIfam" id="TIGR00445">
    <property type="entry name" value="mraY"/>
    <property type="match status" value="1"/>
</dbReference>
<dbReference type="PANTHER" id="PTHR22926">
    <property type="entry name" value="PHOSPHO-N-ACETYLMURAMOYL-PENTAPEPTIDE-TRANSFERASE"/>
    <property type="match status" value="1"/>
</dbReference>
<dbReference type="PANTHER" id="PTHR22926:SF5">
    <property type="entry name" value="PHOSPHO-N-ACETYLMURAMOYL-PENTAPEPTIDE-TRANSFERASE HOMOLOG"/>
    <property type="match status" value="1"/>
</dbReference>
<dbReference type="Pfam" id="PF00953">
    <property type="entry name" value="Glycos_transf_4"/>
    <property type="match status" value="1"/>
</dbReference>
<dbReference type="PROSITE" id="PS01347">
    <property type="entry name" value="MRAY_1"/>
    <property type="match status" value="1"/>
</dbReference>
<dbReference type="PROSITE" id="PS01348">
    <property type="entry name" value="MRAY_2"/>
    <property type="match status" value="1"/>
</dbReference>
<evidence type="ECO:0000255" key="1">
    <source>
        <dbReference type="HAMAP-Rule" id="MF_00038"/>
    </source>
</evidence>
<gene>
    <name evidence="1" type="primary">mraY</name>
    <name type="ordered locus">Avin_13220</name>
</gene>
<feature type="chain" id="PRO_1000202059" description="Phospho-N-acetylmuramoyl-pentapeptide-transferase">
    <location>
        <begin position="1"/>
        <end position="360"/>
    </location>
</feature>
<feature type="transmembrane region" description="Helical" evidence="1">
    <location>
        <begin position="25"/>
        <end position="45"/>
    </location>
</feature>
<feature type="transmembrane region" description="Helical" evidence="1">
    <location>
        <begin position="73"/>
        <end position="93"/>
    </location>
</feature>
<feature type="transmembrane region" description="Helical" evidence="1">
    <location>
        <begin position="97"/>
        <end position="117"/>
    </location>
</feature>
<feature type="transmembrane region" description="Helical" evidence="1">
    <location>
        <begin position="132"/>
        <end position="152"/>
    </location>
</feature>
<feature type="transmembrane region" description="Helical" evidence="1">
    <location>
        <begin position="167"/>
        <end position="187"/>
    </location>
</feature>
<feature type="transmembrane region" description="Helical" evidence="1">
    <location>
        <begin position="199"/>
        <end position="219"/>
    </location>
</feature>
<feature type="transmembrane region" description="Helical" evidence="1">
    <location>
        <begin position="236"/>
        <end position="256"/>
    </location>
</feature>
<feature type="transmembrane region" description="Helical" evidence="1">
    <location>
        <begin position="263"/>
        <end position="283"/>
    </location>
</feature>
<feature type="transmembrane region" description="Helical" evidence="1">
    <location>
        <begin position="288"/>
        <end position="308"/>
    </location>
</feature>
<feature type="transmembrane region" description="Helical" evidence="1">
    <location>
        <begin position="338"/>
        <end position="358"/>
    </location>
</feature>
<name>MRAY_AZOVD</name>